<keyword id="KW-0002">3D-structure</keyword>
<keyword id="KW-0966">Cell projection</keyword>
<keyword id="KW-0969">Cilium</keyword>
<keyword id="KW-0963">Cytoplasm</keyword>
<keyword id="KW-0206">Cytoskeleton</keyword>
<keyword id="KW-0282">Flagellum</keyword>
<keyword id="KW-1185">Reference proteome</keyword>
<organism>
    <name type="scientific">Mus musculus</name>
    <name type="common">Mouse</name>
    <dbReference type="NCBI Taxonomy" id="10090"/>
    <lineage>
        <taxon>Eukaryota</taxon>
        <taxon>Metazoa</taxon>
        <taxon>Chordata</taxon>
        <taxon>Craniata</taxon>
        <taxon>Vertebrata</taxon>
        <taxon>Euteleostomi</taxon>
        <taxon>Mammalia</taxon>
        <taxon>Eutheria</taxon>
        <taxon>Euarchontoglires</taxon>
        <taxon>Glires</taxon>
        <taxon>Rodentia</taxon>
        <taxon>Myomorpha</taxon>
        <taxon>Muroidea</taxon>
        <taxon>Muridae</taxon>
        <taxon>Murinae</taxon>
        <taxon>Mus</taxon>
        <taxon>Mus</taxon>
    </lineage>
</organism>
<comment type="function">
    <text evidence="5 6 7 8 9">Microtubule inner protein involved in the attachment of outer dynein arms (ODAs) to dynein-decorated doublet microtubules (DMTs) in cilia axoneme (PubMed:34715025, PubMed:37295417, PubMed:37865089, PubMed:37989994). Functions at the initial step of left-right asymmetry specification of the visceral organs (PubMed:27305836).</text>
</comment>
<comment type="subunit">
    <text evidence="1 7 8 9">Microtubule inner protein component of sperm flagellar doublet microtubules (PubMed:37295417, PubMed:37865089, PubMed:37989994). Interacts with CFAP53, ODAD1 and ODAD3; the interactions link the outer dynein arms docking complex (ODA-DC) to the internal microtubule inner proteins (MIP) in cilium axoneme (By similarity).</text>
</comment>
<comment type="subcellular location">
    <subcellularLocation>
        <location evidence="1">Cytoplasm</location>
        <location evidence="1">Cytoskeleton</location>
        <location evidence="1">Cilium axoneme</location>
    </subcellularLocation>
    <subcellularLocation>
        <location evidence="7 8 9">Cytoplasm</location>
        <location evidence="7 8 9">Cytoskeleton</location>
        <location evidence="7 8 9">Flagellum axoneme</location>
    </subcellularLocation>
</comment>
<comment type="tissue specificity">
    <text evidence="3 5">Expressed in brain, lung, kidney and testis.</text>
</comment>
<comment type="developmental stage">
    <text evidence="3 5">At 8 dpc, strongly expressed in the node area (PubMed:27305836). May be up-regulated during progression from G1 to S phase of the cell cycle. Maximal expression in S or G2 phase.</text>
</comment>
<comment type="induction">
    <text evidence="4">By p53/TP53. Protein levels are stabilized following gamma-irradiation.</text>
</comment>
<comment type="disruption phenotype">
    <text evidence="5 6">Mutant mice exhibit severe laterality defects, including situs inversus totalis and heterotaxy with randomized situs and left and right isomerisms (PubMed:27305836, PubMed:34715025). They show partial embryonic lethality associated with heterotaxia (PubMed:27305836, PubMed:34715025). The motility of tracheal cilia in adult mice is also affected (PubMed:34715025). At 8 dpc, they have a reduced beat frequency of nodal cilia (PubMed:34715025). 50% of tracheal cilia axonemes have missing dynein arms (PubMed:34715025). Double PIERCE1 and PIERCE2 mutants show high levels of embryonic and pre-weaning lethality. The few mice that survive birth display hydrocephalus and laterality abnormalities, dying by 20 days of age (PubMed:34715025).</text>
</comment>
<comment type="similarity">
    <text evidence="11">Belongs to the PIERCE1 family.</text>
</comment>
<reference key="1">
    <citation type="journal article" date="2007" name="Mol. Cells">
        <title>Identification of a novel Rb-regulated gene associated with the cell cycle.</title>
        <authorList>
            <person name="Sung Y.H."/>
            <person name="Kim H.J."/>
            <person name="Lee H.W."/>
        </authorList>
    </citation>
    <scope>NUCLEOTIDE SEQUENCE [MRNA]</scope>
    <scope>TISSUE SPECIFICITY</scope>
    <scope>DEVELOPMENTAL STAGE</scope>
</reference>
<reference key="2">
    <citation type="journal article" date="2009" name="PLoS Biol.">
        <title>Lineage-specific biology revealed by a finished genome assembly of the mouse.</title>
        <authorList>
            <person name="Church D.M."/>
            <person name="Goodstadt L."/>
            <person name="Hillier L.W."/>
            <person name="Zody M.C."/>
            <person name="Goldstein S."/>
            <person name="She X."/>
            <person name="Bult C.J."/>
            <person name="Agarwala R."/>
            <person name="Cherry J.L."/>
            <person name="DiCuccio M."/>
            <person name="Hlavina W."/>
            <person name="Kapustin Y."/>
            <person name="Meric P."/>
            <person name="Maglott D."/>
            <person name="Birtle Z."/>
            <person name="Marques A.C."/>
            <person name="Graves T."/>
            <person name="Zhou S."/>
            <person name="Teague B."/>
            <person name="Potamousis K."/>
            <person name="Churas C."/>
            <person name="Place M."/>
            <person name="Herschleb J."/>
            <person name="Runnheim R."/>
            <person name="Forrest D."/>
            <person name="Amos-Landgraf J."/>
            <person name="Schwartz D.C."/>
            <person name="Cheng Z."/>
            <person name="Lindblad-Toh K."/>
            <person name="Eichler E.E."/>
            <person name="Ponting C.P."/>
        </authorList>
    </citation>
    <scope>NUCLEOTIDE SEQUENCE [LARGE SCALE GENOMIC DNA]</scope>
    <source>
        <strain>C57BL/6J</strain>
    </source>
</reference>
<reference key="3">
    <citation type="journal article" date="2004" name="Genome Res.">
        <title>The status, quality, and expansion of the NIH full-length cDNA project: the Mammalian Gene Collection (MGC).</title>
        <authorList>
            <consortium name="The MGC Project Team"/>
        </authorList>
    </citation>
    <scope>NUCLEOTIDE SEQUENCE [LARGE SCALE MRNA]</scope>
    <source>
        <tissue>Testis</tissue>
    </source>
</reference>
<reference key="4">
    <citation type="journal article" date="2010" name="Cancer Res.">
        <title>Pierce1, a novel p53 target gene contributing to the ultraviolet-induced DNA damage response.</title>
        <authorList>
            <person name="Sung Y.H."/>
            <person name="Kim H.J."/>
            <person name="Devkota S."/>
            <person name="Roh J."/>
            <person name="Lee J."/>
            <person name="Rhee K."/>
            <person name="Bahk Y.Y."/>
            <person name="Lee H.W."/>
        </authorList>
    </citation>
    <scope>INDUCTION BY TP53</scope>
</reference>
<reference key="5">
    <citation type="journal article" date="2016" name="Sci. Rep.">
        <title>PIERCE1 is critical for specification of left-right asymmetry in mice.</title>
        <authorList>
            <person name="Sung Y.H."/>
            <person name="Baek I.J."/>
            <person name="Kim Y.H."/>
            <person name="Gho Y.S."/>
            <person name="Oh S.P."/>
            <person name="Lee Y.J."/>
            <person name="Lee H.W."/>
        </authorList>
    </citation>
    <scope>FUNCTION</scope>
    <scope>DISRUPTION PHENOTYPE</scope>
    <scope>TISSUE SPECIFICITY</scope>
    <scope>DEVELOPMENTAL STAGE</scope>
</reference>
<reference key="6">
    <citation type="journal article" date="2021" name="Cell">
        <title>De novo identification of mammalian ciliary motility proteins using cryo-EM.</title>
        <authorList>
            <person name="Gui M."/>
            <person name="Farley H."/>
            <person name="Anujan P."/>
            <person name="Anderson J.R."/>
            <person name="Maxwell D.W."/>
            <person name="Whitchurch J.B."/>
            <person name="Botsch J.J."/>
            <person name="Qiu T."/>
            <person name="Meleppattu S."/>
            <person name="Singh S.K."/>
            <person name="Zhang Q."/>
            <person name="Thompson J."/>
            <person name="Lucas J.S."/>
            <person name="Bingle C.D."/>
            <person name="Norris D.P."/>
            <person name="Roy S."/>
            <person name="Brown A."/>
        </authorList>
    </citation>
    <scope>DISRUPTION PHENOTYPE</scope>
    <scope>FUNCTION</scope>
</reference>
<reference evidence="14" key="7">
    <citation type="journal article" date="2023" name="Cell">
        <title>Structures of sperm flagellar doublet microtubules expand the genetic spectrum of male infertility.</title>
        <authorList>
            <person name="Zhou L."/>
            <person name="Liu H."/>
            <person name="Liu S."/>
            <person name="Yang X."/>
            <person name="Dong Y."/>
            <person name="Pan Y."/>
            <person name="Xiao Z."/>
            <person name="Zheng B."/>
            <person name="Sun Y."/>
            <person name="Huang P."/>
            <person name="Zhang X."/>
            <person name="Hu J."/>
            <person name="Sun R."/>
            <person name="Feng S."/>
            <person name="Zhu Y."/>
            <person name="Liu M."/>
            <person name="Gui M."/>
            <person name="Wu J."/>
        </authorList>
    </citation>
    <scope>STRUCTURE BY ELECTRON MICROSCOPY (3.50 ANGSTROMS) OF SPERM FLAGELLAR DOUBLET MICROTUBULES</scope>
    <scope>FUNCTION</scope>
    <scope>SUBCELLULAR LOCATION</scope>
    <scope>SUBUNIT</scope>
</reference>
<reference evidence="15" key="8">
    <citation type="journal article" date="2023" name="Cell">
        <title>De novo protein identification in mammalian sperm using in situ cryoelectron tomography and AlphaFold2 docking.</title>
        <authorList>
            <person name="Chen Z."/>
            <person name="Shiozaki M."/>
            <person name="Haas K.M."/>
            <person name="Skinner W.M."/>
            <person name="Zhao S."/>
            <person name="Guo C."/>
            <person name="Polacco B.J."/>
            <person name="Yu Z."/>
            <person name="Krogan N.J."/>
            <person name="Lishko P.V."/>
            <person name="Kaake R.M."/>
            <person name="Vale R.D."/>
            <person name="Agard D.A."/>
        </authorList>
    </citation>
    <scope>STRUCTURE BY ELECTRON MICROSCOPY (7.70 ANGSTROMS) OF SPERM FLAGELLAR DOUBLET MICROTUBULES</scope>
    <scope>FUNCTION</scope>
    <scope>SUBCELLULAR LOCATION</scope>
    <scope>SUBUNIT</scope>
</reference>
<reference evidence="13" key="9">
    <citation type="journal article" date="2023" name="Cell Discov.">
        <title>In-cell structural insight into the stability of sperm microtubule doublet.</title>
        <authorList>
            <person name="Tai L."/>
            <person name="Yin G."/>
            <person name="Huang X."/>
            <person name="Sun F."/>
            <person name="Zhu Y."/>
        </authorList>
    </citation>
    <scope>STRUCTURE BY ELECTRON MICROSCOPY (4.50 ANGSTROMS)</scope>
    <scope>FUNCTION</scope>
    <scope>SUBUNIT</scope>
    <scope>SUBCELLULAR LOCATION</scope>
</reference>
<protein>
    <recommendedName>
        <fullName evidence="12">Piercer of microtubule wall 1 protein</fullName>
        <shortName evidence="11">Pierce1</shortName>
    </recommendedName>
    <alternativeName>
        <fullName evidence="10">p53-induced expression in RB-null cells protein 1</fullName>
    </alternativeName>
</protein>
<name>PIRC1_MOUSE</name>
<gene>
    <name evidence="12" type="primary">Pierce1</name>
</gene>
<feature type="chain" id="PRO_0000359780" description="Piercer of microtubule wall 1 protein">
    <location>
        <begin position="1"/>
        <end position="167"/>
    </location>
</feature>
<feature type="region of interest" description="Disordered" evidence="2">
    <location>
        <begin position="1"/>
        <end position="54"/>
    </location>
</feature>
<feature type="compositionally biased region" description="Basic and acidic residues" evidence="2">
    <location>
        <begin position="16"/>
        <end position="54"/>
    </location>
</feature>
<dbReference type="EMBL" id="AY927869">
    <property type="protein sequence ID" value="AAX22218.1"/>
    <property type="molecule type" value="mRNA"/>
</dbReference>
<dbReference type="EMBL" id="AL772249">
    <property type="status" value="NOT_ANNOTATED_CDS"/>
    <property type="molecule type" value="Genomic_DNA"/>
</dbReference>
<dbReference type="EMBL" id="BC099566">
    <property type="protein sequence ID" value="AAH99566.1"/>
    <property type="molecule type" value="mRNA"/>
</dbReference>
<dbReference type="CCDS" id="CCDS15837.1"/>
<dbReference type="RefSeq" id="NP_081316.1">
    <property type="nucleotide sequence ID" value="NM_027040.1"/>
</dbReference>
<dbReference type="PDB" id="8I7R">
    <property type="method" value="EM"/>
    <property type="resolution" value="6.50 A"/>
    <property type="chains" value="M=1-167"/>
</dbReference>
<dbReference type="PDB" id="8IYJ">
    <property type="method" value="EM"/>
    <property type="resolution" value="3.50 A"/>
    <property type="chains" value="y=1-167"/>
</dbReference>
<dbReference type="PDB" id="8TO0">
    <property type="method" value="EM"/>
    <property type="resolution" value="7.70 A"/>
    <property type="chains" value="Fw=1-167"/>
</dbReference>
<dbReference type="PDBsum" id="8I7R"/>
<dbReference type="PDBsum" id="8IYJ"/>
<dbReference type="PDBsum" id="8TO0"/>
<dbReference type="EMDB" id="EMD-35230"/>
<dbReference type="EMDB" id="EMD-35823"/>
<dbReference type="EMDB" id="EMD-41431"/>
<dbReference type="FunCoup" id="Q5BN45">
    <property type="interactions" value="971"/>
</dbReference>
<dbReference type="STRING" id="10090.ENSMUSP00000083557"/>
<dbReference type="PhosphoSitePlus" id="Q5BN45"/>
<dbReference type="PaxDb" id="10090-ENSMUSP00000083557"/>
<dbReference type="Antibodypedia" id="18585">
    <property type="antibodies" value="51 antibodies from 18 providers"/>
</dbReference>
<dbReference type="Ensembl" id="ENSMUST00000086370.11">
    <property type="protein sequence ID" value="ENSMUSP00000083557.5"/>
    <property type="gene ID" value="ENSMUSG00000026831.17"/>
</dbReference>
<dbReference type="GeneID" id="69327"/>
<dbReference type="KEGG" id="mmu:69327"/>
<dbReference type="UCSC" id="uc008iyf.1">
    <property type="organism name" value="mouse"/>
</dbReference>
<dbReference type="AGR" id="MGI:1916577"/>
<dbReference type="CTD" id="138162"/>
<dbReference type="MGI" id="MGI:1916577">
    <property type="gene designation" value="Pierce1"/>
</dbReference>
<dbReference type="VEuPathDB" id="HostDB:ENSMUSG00000026831"/>
<dbReference type="eggNOG" id="ENOG502S22V">
    <property type="taxonomic scope" value="Eukaryota"/>
</dbReference>
<dbReference type="GeneTree" id="ENSGT00940000154745"/>
<dbReference type="HOGENOM" id="CLU_135708_0_0_1"/>
<dbReference type="InParanoid" id="Q5BN45"/>
<dbReference type="OMA" id="MFRNNTF"/>
<dbReference type="OrthoDB" id="546383at2759"/>
<dbReference type="PhylomeDB" id="Q5BN45"/>
<dbReference type="TreeFam" id="TF323876"/>
<dbReference type="BioGRID-ORCS" id="69327">
    <property type="hits" value="2 hits in 79 CRISPR screens"/>
</dbReference>
<dbReference type="PRO" id="PR:Q5BN45"/>
<dbReference type="Proteomes" id="UP000000589">
    <property type="component" value="Chromosome 2"/>
</dbReference>
<dbReference type="RNAct" id="Q5BN45">
    <property type="molecule type" value="protein"/>
</dbReference>
<dbReference type="Bgee" id="ENSMUSG00000026831">
    <property type="expression patterns" value="Expressed in seminiferous tubule of testis and 92 other cell types or tissues"/>
</dbReference>
<dbReference type="ExpressionAtlas" id="Q5BN45">
    <property type="expression patterns" value="baseline and differential"/>
</dbReference>
<dbReference type="GO" id="GO:0160111">
    <property type="term" value="C:axonemal A tubule inner sheath"/>
    <property type="evidence" value="ECO:0000314"/>
    <property type="project" value="UniProtKB"/>
</dbReference>
<dbReference type="GO" id="GO:0005879">
    <property type="term" value="C:axonemal microtubule"/>
    <property type="evidence" value="ECO:0000250"/>
    <property type="project" value="UniProtKB"/>
</dbReference>
<dbReference type="GO" id="GO:0005737">
    <property type="term" value="C:cytoplasm"/>
    <property type="evidence" value="ECO:0000314"/>
    <property type="project" value="UniProtKB"/>
</dbReference>
<dbReference type="GO" id="GO:0005634">
    <property type="term" value="C:nucleus"/>
    <property type="evidence" value="ECO:0000314"/>
    <property type="project" value="UniProtKB"/>
</dbReference>
<dbReference type="GO" id="GO:0036126">
    <property type="term" value="C:sperm flagellum"/>
    <property type="evidence" value="ECO:0000314"/>
    <property type="project" value="UniProtKB"/>
</dbReference>
<dbReference type="GO" id="GO:0035082">
    <property type="term" value="P:axoneme assembly"/>
    <property type="evidence" value="ECO:0000315"/>
    <property type="project" value="UniProtKB"/>
</dbReference>
<dbReference type="GO" id="GO:0071494">
    <property type="term" value="P:cellular response to UV-C"/>
    <property type="evidence" value="ECO:0000315"/>
    <property type="project" value="MGI"/>
</dbReference>
<dbReference type="GO" id="GO:0003341">
    <property type="term" value="P:cilium movement"/>
    <property type="evidence" value="ECO:0000315"/>
    <property type="project" value="UniProtKB"/>
</dbReference>
<dbReference type="GO" id="GO:0007368">
    <property type="term" value="P:determination of left/right symmetry"/>
    <property type="evidence" value="ECO:0000315"/>
    <property type="project" value="UniProtKB"/>
</dbReference>
<dbReference type="GO" id="GO:0006974">
    <property type="term" value="P:DNA damage response"/>
    <property type="evidence" value="ECO:0000315"/>
    <property type="project" value="MGI"/>
</dbReference>
<dbReference type="GO" id="GO:0061966">
    <property type="term" value="P:establishment of left/right asymmetry"/>
    <property type="evidence" value="ECO:0000315"/>
    <property type="project" value="UniProtKB"/>
</dbReference>
<dbReference type="GO" id="GO:0030317">
    <property type="term" value="P:flagellated sperm motility"/>
    <property type="evidence" value="ECO:0000314"/>
    <property type="project" value="UniProtKB"/>
</dbReference>
<dbReference type="GO" id="GO:0010468">
    <property type="term" value="P:regulation of gene expression"/>
    <property type="evidence" value="ECO:0000315"/>
    <property type="project" value="MGI"/>
</dbReference>
<dbReference type="InterPro" id="IPR026507">
    <property type="entry name" value="PIRC1/2"/>
</dbReference>
<dbReference type="PANTHER" id="PTHR20899">
    <property type="entry name" value="PIERCE HOMOLOG"/>
    <property type="match status" value="1"/>
</dbReference>
<dbReference type="PANTHER" id="PTHR20899:SF1">
    <property type="entry name" value="PIERCER OF MICROTUBULE WALL 1 PROTEIN"/>
    <property type="match status" value="1"/>
</dbReference>
<dbReference type="Pfam" id="PF14892">
    <property type="entry name" value="PIRC1_2"/>
    <property type="match status" value="1"/>
</dbReference>
<proteinExistence type="evidence at protein level"/>
<accession>Q5BN45</accession>
<sequence>MSEEKPQQSAEEPEPGEPKAKPAPEEPEPGEPKAKPAPEEPEPGEPKAKPAPEKTSDYYRISEKLPVRFNNPGWFHGYGTKEAVSMYRTSNQTYGSRAPTVHEMPKVFYPSSNKFSRQHAAFGMFQSHNINVTLEKSLVTGPDNHITHYDRLNFHPSYNVNRPSICD</sequence>
<evidence type="ECO:0000250" key="1">
    <source>
        <dbReference type="UniProtKB" id="Q32P67"/>
    </source>
</evidence>
<evidence type="ECO:0000256" key="2">
    <source>
        <dbReference type="SAM" id="MobiDB-lite"/>
    </source>
</evidence>
<evidence type="ECO:0000269" key="3">
    <source>
    </source>
</evidence>
<evidence type="ECO:0000269" key="4">
    <source>
    </source>
</evidence>
<evidence type="ECO:0000269" key="5">
    <source>
    </source>
</evidence>
<evidence type="ECO:0000269" key="6">
    <source>
    </source>
</evidence>
<evidence type="ECO:0000269" key="7">
    <source>
    </source>
</evidence>
<evidence type="ECO:0000269" key="8">
    <source>
    </source>
</evidence>
<evidence type="ECO:0000269" key="9">
    <source>
    </source>
</evidence>
<evidence type="ECO:0000303" key="10">
    <source>
    </source>
</evidence>
<evidence type="ECO:0000305" key="11"/>
<evidence type="ECO:0000312" key="12">
    <source>
        <dbReference type="MGI" id="MGI:1916577"/>
    </source>
</evidence>
<evidence type="ECO:0007744" key="13">
    <source>
        <dbReference type="PDB" id="8I7R"/>
    </source>
</evidence>
<evidence type="ECO:0007744" key="14">
    <source>
        <dbReference type="PDB" id="8IYJ"/>
    </source>
</evidence>
<evidence type="ECO:0007744" key="15">
    <source>
        <dbReference type="PDB" id="8TO0"/>
    </source>
</evidence>